<keyword id="KW-0342">GTP-binding</keyword>
<keyword id="KW-0378">Hydrolase</keyword>
<keyword id="KW-0479">Metal-binding</keyword>
<keyword id="KW-0547">Nucleotide-binding</keyword>
<keyword id="KW-0554">One-carbon metabolism</keyword>
<keyword id="KW-1185">Reference proteome</keyword>
<keyword id="KW-0862">Zinc</keyword>
<comment type="catalytic activity">
    <reaction>
        <text>GTP + H2O = 7,8-dihydroneopterin 3'-triphosphate + formate + H(+)</text>
        <dbReference type="Rhea" id="RHEA:17473"/>
        <dbReference type="ChEBI" id="CHEBI:15377"/>
        <dbReference type="ChEBI" id="CHEBI:15378"/>
        <dbReference type="ChEBI" id="CHEBI:15740"/>
        <dbReference type="ChEBI" id="CHEBI:37565"/>
        <dbReference type="ChEBI" id="CHEBI:58462"/>
        <dbReference type="EC" id="3.5.4.16"/>
    </reaction>
</comment>
<comment type="pathway">
    <text>Cofactor biosynthesis; 7,8-dihydroneopterin triphosphate biosynthesis; 7,8-dihydroneopterin triphosphate from GTP: step 1/1.</text>
</comment>
<comment type="subunit">
    <text evidence="1">Toroid-shaped homodecamer, composed of two pentamers of five dimers.</text>
</comment>
<comment type="similarity">
    <text evidence="2">Belongs to the GTP cyclohydrolase I family.</text>
</comment>
<gene>
    <name type="primary">folE</name>
    <name type="ordered locus">HP_0928</name>
</gene>
<dbReference type="EC" id="3.5.4.16"/>
<dbReference type="EMBL" id="AE000511">
    <property type="protein sequence ID" value="AAD07973.1"/>
    <property type="molecule type" value="Genomic_DNA"/>
</dbReference>
<dbReference type="PIR" id="H64635">
    <property type="entry name" value="H64635"/>
</dbReference>
<dbReference type="RefSeq" id="NP_207720.1">
    <property type="nucleotide sequence ID" value="NC_000915.1"/>
</dbReference>
<dbReference type="RefSeq" id="WP_000427004.1">
    <property type="nucleotide sequence ID" value="NC_018939.1"/>
</dbReference>
<dbReference type="SMR" id="P56462"/>
<dbReference type="DIP" id="DIP-3586N"/>
<dbReference type="FunCoup" id="P56462">
    <property type="interactions" value="297"/>
</dbReference>
<dbReference type="IntAct" id="P56462">
    <property type="interactions" value="5"/>
</dbReference>
<dbReference type="MINT" id="P56462"/>
<dbReference type="STRING" id="85962.HP_0928"/>
<dbReference type="PaxDb" id="85962-C694_04775"/>
<dbReference type="EnsemblBacteria" id="AAD07973">
    <property type="protein sequence ID" value="AAD07973"/>
    <property type="gene ID" value="HP_0928"/>
</dbReference>
<dbReference type="KEGG" id="heo:C694_04775"/>
<dbReference type="KEGG" id="hpy:HP_0928"/>
<dbReference type="PATRIC" id="fig|85962.47.peg.993"/>
<dbReference type="eggNOG" id="COG0302">
    <property type="taxonomic scope" value="Bacteria"/>
</dbReference>
<dbReference type="InParanoid" id="P56462"/>
<dbReference type="OrthoDB" id="9801207at2"/>
<dbReference type="PhylomeDB" id="P56462"/>
<dbReference type="UniPathway" id="UPA00848">
    <property type="reaction ID" value="UER00151"/>
</dbReference>
<dbReference type="Proteomes" id="UP000000429">
    <property type="component" value="Chromosome"/>
</dbReference>
<dbReference type="GO" id="GO:0005737">
    <property type="term" value="C:cytoplasm"/>
    <property type="evidence" value="ECO:0000318"/>
    <property type="project" value="GO_Central"/>
</dbReference>
<dbReference type="GO" id="GO:0005525">
    <property type="term" value="F:GTP binding"/>
    <property type="evidence" value="ECO:0000318"/>
    <property type="project" value="GO_Central"/>
</dbReference>
<dbReference type="GO" id="GO:0003934">
    <property type="term" value="F:GTP cyclohydrolase I activity"/>
    <property type="evidence" value="ECO:0000318"/>
    <property type="project" value="GO_Central"/>
</dbReference>
<dbReference type="GO" id="GO:0008270">
    <property type="term" value="F:zinc ion binding"/>
    <property type="evidence" value="ECO:0000318"/>
    <property type="project" value="GO_Central"/>
</dbReference>
<dbReference type="GO" id="GO:0006730">
    <property type="term" value="P:one-carbon metabolic process"/>
    <property type="evidence" value="ECO:0007669"/>
    <property type="project" value="UniProtKB-UniRule"/>
</dbReference>
<dbReference type="GO" id="GO:0006729">
    <property type="term" value="P:tetrahydrobiopterin biosynthetic process"/>
    <property type="evidence" value="ECO:0000318"/>
    <property type="project" value="GO_Central"/>
</dbReference>
<dbReference type="GO" id="GO:0046654">
    <property type="term" value="P:tetrahydrofolate biosynthetic process"/>
    <property type="evidence" value="ECO:0007669"/>
    <property type="project" value="UniProtKB-UniRule"/>
</dbReference>
<dbReference type="FunFam" id="3.30.1130.10:FF:000001">
    <property type="entry name" value="GTP cyclohydrolase 1"/>
    <property type="match status" value="1"/>
</dbReference>
<dbReference type="Gene3D" id="1.10.286.10">
    <property type="match status" value="1"/>
</dbReference>
<dbReference type="Gene3D" id="3.30.1130.10">
    <property type="match status" value="1"/>
</dbReference>
<dbReference type="HAMAP" id="MF_00223">
    <property type="entry name" value="FolE"/>
    <property type="match status" value="1"/>
</dbReference>
<dbReference type="InterPro" id="IPR043133">
    <property type="entry name" value="GTP-CH-I_C/QueF"/>
</dbReference>
<dbReference type="InterPro" id="IPR043134">
    <property type="entry name" value="GTP-CH-I_N"/>
</dbReference>
<dbReference type="InterPro" id="IPR001474">
    <property type="entry name" value="GTP_CycHdrlase_I"/>
</dbReference>
<dbReference type="InterPro" id="IPR018234">
    <property type="entry name" value="GTP_CycHdrlase_I_CS"/>
</dbReference>
<dbReference type="InterPro" id="IPR020602">
    <property type="entry name" value="GTP_CycHdrlase_I_dom"/>
</dbReference>
<dbReference type="NCBIfam" id="TIGR00063">
    <property type="entry name" value="folE"/>
    <property type="match status" value="1"/>
</dbReference>
<dbReference type="NCBIfam" id="NF006825">
    <property type="entry name" value="PRK09347.1-2"/>
    <property type="match status" value="1"/>
</dbReference>
<dbReference type="NCBIfam" id="NF006826">
    <property type="entry name" value="PRK09347.1-3"/>
    <property type="match status" value="1"/>
</dbReference>
<dbReference type="PANTHER" id="PTHR11109:SF7">
    <property type="entry name" value="GTP CYCLOHYDROLASE 1"/>
    <property type="match status" value="1"/>
</dbReference>
<dbReference type="PANTHER" id="PTHR11109">
    <property type="entry name" value="GTP CYCLOHYDROLASE I"/>
    <property type="match status" value="1"/>
</dbReference>
<dbReference type="Pfam" id="PF01227">
    <property type="entry name" value="GTP_cyclohydroI"/>
    <property type="match status" value="1"/>
</dbReference>
<dbReference type="SUPFAM" id="SSF55620">
    <property type="entry name" value="Tetrahydrobiopterin biosynthesis enzymes-like"/>
    <property type="match status" value="1"/>
</dbReference>
<dbReference type="PROSITE" id="PS00859">
    <property type="entry name" value="GTP_CYCLOHYDROL_1_1"/>
    <property type="match status" value="1"/>
</dbReference>
<dbReference type="PROSITE" id="PS00860">
    <property type="entry name" value="GTP_CYCLOHYDROL_1_2"/>
    <property type="match status" value="1"/>
</dbReference>
<accession>P56462</accession>
<protein>
    <recommendedName>
        <fullName>GTP cyclohydrolase 1</fullName>
        <ecNumber>3.5.4.16</ecNumber>
    </recommendedName>
    <alternativeName>
        <fullName>GTP cyclohydrolase I</fullName>
        <shortName>GTP-CH-I</shortName>
    </alternativeName>
</protein>
<evidence type="ECO:0000250" key="1"/>
<evidence type="ECO:0000305" key="2"/>
<reference key="1">
    <citation type="journal article" date="1997" name="Nature">
        <title>The complete genome sequence of the gastric pathogen Helicobacter pylori.</title>
        <authorList>
            <person name="Tomb J.-F."/>
            <person name="White O."/>
            <person name="Kerlavage A.R."/>
            <person name="Clayton R.A."/>
            <person name="Sutton G.G."/>
            <person name="Fleischmann R.D."/>
            <person name="Ketchum K.A."/>
            <person name="Klenk H.-P."/>
            <person name="Gill S.R."/>
            <person name="Dougherty B.A."/>
            <person name="Nelson K.E."/>
            <person name="Quackenbush J."/>
            <person name="Zhou L."/>
            <person name="Kirkness E.F."/>
            <person name="Peterson S.N."/>
            <person name="Loftus B.J."/>
            <person name="Richardson D.L."/>
            <person name="Dodson R.J."/>
            <person name="Khalak H.G."/>
            <person name="Glodek A."/>
            <person name="McKenney K."/>
            <person name="FitzGerald L.M."/>
            <person name="Lee N."/>
            <person name="Adams M.D."/>
            <person name="Hickey E.K."/>
            <person name="Berg D.E."/>
            <person name="Gocayne J.D."/>
            <person name="Utterback T.R."/>
            <person name="Peterson J.D."/>
            <person name="Kelley J.M."/>
            <person name="Cotton M.D."/>
            <person name="Weidman J.F."/>
            <person name="Fujii C."/>
            <person name="Bowman C."/>
            <person name="Watthey L."/>
            <person name="Wallin E."/>
            <person name="Hayes W.S."/>
            <person name="Borodovsky M."/>
            <person name="Karp P.D."/>
            <person name="Smith H.O."/>
            <person name="Fraser C.M."/>
            <person name="Venter J.C."/>
        </authorList>
    </citation>
    <scope>NUCLEOTIDE SEQUENCE [LARGE SCALE GENOMIC DNA]</scope>
    <source>
        <strain>ATCC 700392 / 26695</strain>
    </source>
</reference>
<name>GCH1_HELPY</name>
<organism>
    <name type="scientific">Helicobacter pylori (strain ATCC 700392 / 26695)</name>
    <name type="common">Campylobacter pylori</name>
    <dbReference type="NCBI Taxonomy" id="85962"/>
    <lineage>
        <taxon>Bacteria</taxon>
        <taxon>Pseudomonadati</taxon>
        <taxon>Campylobacterota</taxon>
        <taxon>Epsilonproteobacteria</taxon>
        <taxon>Campylobacterales</taxon>
        <taxon>Helicobacteraceae</taxon>
        <taxon>Helicobacter</taxon>
    </lineage>
</organism>
<proteinExistence type="inferred from homology"/>
<sequence length="180" mass="20858">MENFFNQFFESIGEDKNREGLKETPKRVQELWKFLYKGYKEDPRVALKSAYFQGVCDEMIVAQNIEFYSTCEHHLLPFLGNISVGYIPKEKIVGISAIAKLIEIYSRRLQIQERLTIQIAETFDEIIEPRGVIVVCEAKHLCMSMQGVQKQNAIIKTSVLRGLFKKDSKTRAEFMQLLKS</sequence>
<feature type="chain" id="PRO_0000119413" description="GTP cyclohydrolase 1">
    <location>
        <begin position="1"/>
        <end position="180"/>
    </location>
</feature>
<feature type="binding site" evidence="1">
    <location>
        <position position="71"/>
    </location>
    <ligand>
        <name>Zn(2+)</name>
        <dbReference type="ChEBI" id="CHEBI:29105"/>
    </ligand>
</feature>
<feature type="binding site" evidence="1">
    <location>
        <position position="74"/>
    </location>
    <ligand>
        <name>Zn(2+)</name>
        <dbReference type="ChEBI" id="CHEBI:29105"/>
    </ligand>
</feature>
<feature type="binding site" evidence="1">
    <location>
        <position position="142"/>
    </location>
    <ligand>
        <name>Zn(2+)</name>
        <dbReference type="ChEBI" id="CHEBI:29105"/>
    </ligand>
</feature>